<proteinExistence type="inferred from homology"/>
<name>ATPF1_GRABC</name>
<feature type="chain" id="PRO_0000368509" description="ATP synthase subunit b 1">
    <location>
        <begin position="1"/>
        <end position="194"/>
    </location>
</feature>
<feature type="transmembrane region" description="Helical" evidence="1">
    <location>
        <begin position="1"/>
        <end position="21"/>
    </location>
</feature>
<sequence length="194" mass="20707">MLLGTVVTVLSTLPAIAYAMDPESPEHEGMPQLNFANPLTTSQVVWMALILLAFYLLLSKWALPQVSQVVDDRNASIMGDLDSAHLAKAEANAAVEEMNDAIRRANLEGQAEIEKTVSAAKAKAQQEAAEAHARLERQLADAEARIASSRDTAMGALRDVATDTTQALIARLTGQFPAQDTVEQAVGQALAARS</sequence>
<dbReference type="EMBL" id="CP000394">
    <property type="protein sequence ID" value="ABI62767.1"/>
    <property type="status" value="ALT_INIT"/>
    <property type="molecule type" value="Genomic_DNA"/>
</dbReference>
<dbReference type="SMR" id="Q0BQY5"/>
<dbReference type="STRING" id="391165.GbCGDNIH1_1869"/>
<dbReference type="KEGG" id="gbe:GbCGDNIH1_1869"/>
<dbReference type="eggNOG" id="COG0711">
    <property type="taxonomic scope" value="Bacteria"/>
</dbReference>
<dbReference type="HOGENOM" id="CLU_079215_1_1_5"/>
<dbReference type="Proteomes" id="UP000001963">
    <property type="component" value="Chromosome"/>
</dbReference>
<dbReference type="GO" id="GO:0005886">
    <property type="term" value="C:plasma membrane"/>
    <property type="evidence" value="ECO:0007669"/>
    <property type="project" value="UniProtKB-SubCell"/>
</dbReference>
<dbReference type="GO" id="GO:0045259">
    <property type="term" value="C:proton-transporting ATP synthase complex"/>
    <property type="evidence" value="ECO:0007669"/>
    <property type="project" value="UniProtKB-KW"/>
</dbReference>
<dbReference type="GO" id="GO:0046933">
    <property type="term" value="F:proton-transporting ATP synthase activity, rotational mechanism"/>
    <property type="evidence" value="ECO:0007669"/>
    <property type="project" value="UniProtKB-UniRule"/>
</dbReference>
<dbReference type="GO" id="GO:0046961">
    <property type="term" value="F:proton-transporting ATPase activity, rotational mechanism"/>
    <property type="evidence" value="ECO:0007669"/>
    <property type="project" value="TreeGrafter"/>
</dbReference>
<dbReference type="CDD" id="cd06503">
    <property type="entry name" value="ATP-synt_Fo_b"/>
    <property type="match status" value="1"/>
</dbReference>
<dbReference type="HAMAP" id="MF_01398">
    <property type="entry name" value="ATP_synth_b_bprime"/>
    <property type="match status" value="1"/>
</dbReference>
<dbReference type="InterPro" id="IPR002146">
    <property type="entry name" value="ATP_synth_b/b'su_bac/chlpt"/>
</dbReference>
<dbReference type="InterPro" id="IPR050059">
    <property type="entry name" value="ATP_synthase_B_chain"/>
</dbReference>
<dbReference type="PANTHER" id="PTHR33445:SF1">
    <property type="entry name" value="ATP SYNTHASE SUBUNIT B"/>
    <property type="match status" value="1"/>
</dbReference>
<dbReference type="PANTHER" id="PTHR33445">
    <property type="entry name" value="ATP SYNTHASE SUBUNIT B', CHLOROPLASTIC"/>
    <property type="match status" value="1"/>
</dbReference>
<dbReference type="Pfam" id="PF00430">
    <property type="entry name" value="ATP-synt_B"/>
    <property type="match status" value="1"/>
</dbReference>
<reference key="1">
    <citation type="journal article" date="2007" name="J. Bacteriol.">
        <title>Genome sequence analysis of the emerging human pathogenic acetic acid bacterium Granulibacter bethesdensis.</title>
        <authorList>
            <person name="Greenberg D.E."/>
            <person name="Porcella S.F."/>
            <person name="Zelazny A.M."/>
            <person name="Virtaneva K."/>
            <person name="Sturdevant D.E."/>
            <person name="Kupko J.J. III"/>
            <person name="Barbian K.D."/>
            <person name="Babar A."/>
            <person name="Dorward D.W."/>
            <person name="Holland S.M."/>
        </authorList>
    </citation>
    <scope>NUCLEOTIDE SEQUENCE [LARGE SCALE GENOMIC DNA]</scope>
    <source>
        <strain>ATCC BAA-1260 / CGDNIH1</strain>
    </source>
</reference>
<accession>Q0BQY5</accession>
<protein>
    <recommendedName>
        <fullName evidence="1">ATP synthase subunit b 1</fullName>
    </recommendedName>
    <alternativeName>
        <fullName evidence="1">ATP synthase F(0) sector subunit b 1</fullName>
    </alternativeName>
    <alternativeName>
        <fullName evidence="1">ATPase subunit I 1</fullName>
    </alternativeName>
    <alternativeName>
        <fullName evidence="1">F-type ATPase subunit b 1</fullName>
        <shortName evidence="1">F-ATPase subunit b 1</shortName>
    </alternativeName>
</protein>
<keyword id="KW-0066">ATP synthesis</keyword>
<keyword id="KW-0997">Cell inner membrane</keyword>
<keyword id="KW-1003">Cell membrane</keyword>
<keyword id="KW-0138">CF(0)</keyword>
<keyword id="KW-0375">Hydrogen ion transport</keyword>
<keyword id="KW-0406">Ion transport</keyword>
<keyword id="KW-0472">Membrane</keyword>
<keyword id="KW-1185">Reference proteome</keyword>
<keyword id="KW-0812">Transmembrane</keyword>
<keyword id="KW-1133">Transmembrane helix</keyword>
<keyword id="KW-0813">Transport</keyword>
<comment type="function">
    <text evidence="1">F(1)F(0) ATP synthase produces ATP from ADP in the presence of a proton or sodium gradient. F-type ATPases consist of two structural domains, F(1) containing the extramembraneous catalytic core and F(0) containing the membrane proton channel, linked together by a central stalk and a peripheral stalk. During catalysis, ATP synthesis in the catalytic domain of F(1) is coupled via a rotary mechanism of the central stalk subunits to proton translocation.</text>
</comment>
<comment type="function">
    <text evidence="1">Component of the F(0) channel, it forms part of the peripheral stalk, linking F(1) to F(0).</text>
</comment>
<comment type="subunit">
    <text evidence="1">F-type ATPases have 2 components, F(1) - the catalytic core - and F(0) - the membrane proton channel. F(1) has five subunits: alpha(3), beta(3), gamma(1), delta(1), epsilon(1). F(0) has three main subunits: a(1), b(2) and c(10-14). The alpha and beta chains form an alternating ring which encloses part of the gamma chain. F(1) is attached to F(0) by a central stalk formed by the gamma and epsilon chains, while a peripheral stalk is formed by the delta and b chains.</text>
</comment>
<comment type="subcellular location">
    <subcellularLocation>
        <location evidence="1">Cell inner membrane</location>
        <topology evidence="1">Single-pass membrane protein</topology>
    </subcellularLocation>
</comment>
<comment type="similarity">
    <text evidence="1">Belongs to the ATPase B chain family.</text>
</comment>
<comment type="sequence caution" evidence="2">
    <conflict type="erroneous initiation">
        <sequence resource="EMBL-CDS" id="ABI62767"/>
    </conflict>
</comment>
<organism>
    <name type="scientific">Granulibacter bethesdensis (strain ATCC BAA-1260 / CGDNIH1)</name>
    <dbReference type="NCBI Taxonomy" id="391165"/>
    <lineage>
        <taxon>Bacteria</taxon>
        <taxon>Pseudomonadati</taxon>
        <taxon>Pseudomonadota</taxon>
        <taxon>Alphaproteobacteria</taxon>
        <taxon>Acetobacterales</taxon>
        <taxon>Acetobacteraceae</taxon>
        <taxon>Granulibacter</taxon>
    </lineage>
</organism>
<gene>
    <name evidence="1" type="primary">atpF1</name>
    <name type="ordered locus">GbCGDNIH1_1869</name>
</gene>
<evidence type="ECO:0000255" key="1">
    <source>
        <dbReference type="HAMAP-Rule" id="MF_01398"/>
    </source>
</evidence>
<evidence type="ECO:0000305" key="2"/>